<accession>Q60275</accession>
<feature type="chain" id="PRO_0000194132" description="Uncharacterized MCM-type protein MJECL13">
    <location>
        <begin position="1"/>
        <end position="602"/>
    </location>
</feature>
<feature type="domain" description="MCM">
    <location>
        <begin position="271"/>
        <end position="472"/>
    </location>
</feature>
<feature type="binding site" evidence="1">
    <location>
        <begin position="315"/>
        <end position="322"/>
    </location>
    <ligand>
        <name>ATP</name>
        <dbReference type="ChEBI" id="CHEBI:30616"/>
    </ligand>
</feature>
<keyword id="KW-0067">ATP-binding</keyword>
<keyword id="KW-0131">Cell cycle</keyword>
<keyword id="KW-0235">DNA replication</keyword>
<keyword id="KW-0238">DNA-binding</keyword>
<keyword id="KW-0547">Nucleotide-binding</keyword>
<keyword id="KW-0614">Plasmid</keyword>
<keyword id="KW-1185">Reference proteome</keyword>
<keyword id="KW-0804">Transcription</keyword>
<keyword id="KW-0805">Transcription regulation</keyword>
<dbReference type="EMBL" id="L77118">
    <property type="protein sequence ID" value="AAC37086.1"/>
    <property type="molecule type" value="Genomic_DNA"/>
</dbReference>
<dbReference type="PIR" id="E64511">
    <property type="entry name" value="E64511"/>
</dbReference>
<dbReference type="SMR" id="Q60275"/>
<dbReference type="FunCoup" id="Q60275">
    <property type="interactions" value="129"/>
</dbReference>
<dbReference type="PaxDb" id="243232-MJ_ECL13"/>
<dbReference type="EnsemblBacteria" id="AAC37086">
    <property type="protein sequence ID" value="AAC37086"/>
    <property type="gene ID" value="MJ_ECL13"/>
</dbReference>
<dbReference type="KEGG" id="mja:MJ_ECL13"/>
<dbReference type="eggNOG" id="arCOG00439">
    <property type="taxonomic scope" value="Archaea"/>
</dbReference>
<dbReference type="HOGENOM" id="CLU_000995_7_2_2"/>
<dbReference type="InParanoid" id="Q60275"/>
<dbReference type="OrthoDB" id="6747at2157"/>
<dbReference type="PhylomeDB" id="Q60275"/>
<dbReference type="Proteomes" id="UP000000805">
    <property type="component" value="Plasmid pDSM2661_1"/>
</dbReference>
<dbReference type="GO" id="GO:0042555">
    <property type="term" value="C:MCM complex"/>
    <property type="evidence" value="ECO:0000318"/>
    <property type="project" value="GO_Central"/>
</dbReference>
<dbReference type="GO" id="GO:0005524">
    <property type="term" value="F:ATP binding"/>
    <property type="evidence" value="ECO:0007669"/>
    <property type="project" value="UniProtKB-KW"/>
</dbReference>
<dbReference type="GO" id="GO:0003697">
    <property type="term" value="F:single-stranded DNA binding"/>
    <property type="evidence" value="ECO:0000318"/>
    <property type="project" value="GO_Central"/>
</dbReference>
<dbReference type="GO" id="GO:0006260">
    <property type="term" value="P:DNA replication"/>
    <property type="evidence" value="ECO:0007669"/>
    <property type="project" value="UniProtKB-KW"/>
</dbReference>
<dbReference type="CDD" id="cd17706">
    <property type="entry name" value="MCM"/>
    <property type="match status" value="1"/>
</dbReference>
<dbReference type="Gene3D" id="3.40.50.300">
    <property type="entry name" value="P-loop containing nucleotide triphosphate hydrolases"/>
    <property type="match status" value="1"/>
</dbReference>
<dbReference type="InterPro" id="IPR031327">
    <property type="entry name" value="MCM"/>
</dbReference>
<dbReference type="InterPro" id="IPR018525">
    <property type="entry name" value="MCM_CS"/>
</dbReference>
<dbReference type="InterPro" id="IPR001208">
    <property type="entry name" value="MCM_dom"/>
</dbReference>
<dbReference type="InterPro" id="IPR041562">
    <property type="entry name" value="MCM_lid"/>
</dbReference>
<dbReference type="InterPro" id="IPR012340">
    <property type="entry name" value="NA-bd_OB-fold"/>
</dbReference>
<dbReference type="InterPro" id="IPR027417">
    <property type="entry name" value="P-loop_NTPase"/>
</dbReference>
<dbReference type="PANTHER" id="PTHR11630">
    <property type="entry name" value="DNA REPLICATION LICENSING FACTOR MCM FAMILY MEMBER"/>
    <property type="match status" value="1"/>
</dbReference>
<dbReference type="PANTHER" id="PTHR11630:SF66">
    <property type="entry name" value="DNA REPLICATION LICENSING FACTOR MCM4"/>
    <property type="match status" value="1"/>
</dbReference>
<dbReference type="Pfam" id="PF00493">
    <property type="entry name" value="MCM"/>
    <property type="match status" value="1"/>
</dbReference>
<dbReference type="Pfam" id="PF17855">
    <property type="entry name" value="MCM_lid"/>
    <property type="match status" value="1"/>
</dbReference>
<dbReference type="PRINTS" id="PR01657">
    <property type="entry name" value="MCMFAMILY"/>
</dbReference>
<dbReference type="SMART" id="SM00350">
    <property type="entry name" value="MCM"/>
    <property type="match status" value="1"/>
</dbReference>
<dbReference type="SUPFAM" id="SSF50249">
    <property type="entry name" value="Nucleic acid-binding proteins"/>
    <property type="match status" value="1"/>
</dbReference>
<dbReference type="SUPFAM" id="SSF52540">
    <property type="entry name" value="P-loop containing nucleoside triphosphate hydrolases"/>
    <property type="match status" value="1"/>
</dbReference>
<dbReference type="PROSITE" id="PS00847">
    <property type="entry name" value="MCM_1"/>
    <property type="match status" value="1"/>
</dbReference>
<dbReference type="PROSITE" id="PS50051">
    <property type="entry name" value="MCM_2"/>
    <property type="match status" value="1"/>
</dbReference>
<name>Y3513_METJA</name>
<gene>
    <name type="ordered locus">MJECL13</name>
</gene>
<geneLocation type="plasmid">
    <name>large ECE</name>
</geneLocation>
<organism>
    <name type="scientific">Methanocaldococcus jannaschii (strain ATCC 43067 / DSM 2661 / JAL-1 / JCM 10045 / NBRC 100440)</name>
    <name type="common">Methanococcus jannaschii</name>
    <dbReference type="NCBI Taxonomy" id="243232"/>
    <lineage>
        <taxon>Archaea</taxon>
        <taxon>Methanobacteriati</taxon>
        <taxon>Methanobacteriota</taxon>
        <taxon>Methanomada group</taxon>
        <taxon>Methanococci</taxon>
        <taxon>Methanococcales</taxon>
        <taxon>Methanocaldococcaceae</taxon>
        <taxon>Methanocaldococcus</taxon>
    </lineage>
</organism>
<protein>
    <recommendedName>
        <fullName>Uncharacterized MCM-type protein MJECL13</fullName>
    </recommendedName>
</protein>
<evidence type="ECO:0000255" key="1"/>
<evidence type="ECO:0000305" key="2"/>
<comment type="similarity">
    <text evidence="2">Belongs to the MCM family.</text>
</comment>
<proteinExistence type="inferred from homology"/>
<sequence length="602" mass="69323">MINMCYNFENVKKAYEDQLKNYIKNSLIPNLSSHANNEVVKISMKKLANLGFGYLVDSTLSSITGYYKVRDWIEELLKEELQKSGENKCCNIVLCDYPEEFEISMREIPYYVNKVVKFNGVIISASYPCVLSKKHLYICPKCGRIKEVYFSELFWDDKVFCEFCGGKMEFANVMDYENFQELVVQDLSDESEYYGIEKNPIVWYCGAKPYYFGHVKITGIVREVPRSSKSRIYELIVQAINVEKLGVEKSLINLTEEDVKNIKKVAKRGDIIDILADILIPPLLCDDAIVRKAILIQQIAPYLEDIGKINILLVTEVGIDKTAILKRIGNIPGNNFINIAALKEEELATPYDKRSNILGKFYTVCGGVIPRTLGVLCIDDFNENNKLSTKLSEAFERNVLTTNKGSFYCVPAECSFLCACYPKTKFRKFDQKKSIIKQIGISSILLKNFDLIFPIRDIPDKDRDEEVAKYIFLKYINSDNEEIEGYDYVFVDVGGEKIKIDFEFLKKYVVYSRQITPKITDEVIEKISNWYDEMRKNHYITAKQLNTVIKLSIAVARAKLKECVDEDDVKEAIDIIMHYLKQVVYNPKKGIIDVILLYKNKT</sequence>
<reference key="1">
    <citation type="journal article" date="1996" name="Science">
        <title>Complete genome sequence of the methanogenic archaeon, Methanococcus jannaschii.</title>
        <authorList>
            <person name="Bult C.J."/>
            <person name="White O."/>
            <person name="Olsen G.J."/>
            <person name="Zhou L."/>
            <person name="Fleischmann R.D."/>
            <person name="Sutton G.G."/>
            <person name="Blake J.A."/>
            <person name="FitzGerald L.M."/>
            <person name="Clayton R.A."/>
            <person name="Gocayne J.D."/>
            <person name="Kerlavage A.R."/>
            <person name="Dougherty B.A."/>
            <person name="Tomb J.-F."/>
            <person name="Adams M.D."/>
            <person name="Reich C.I."/>
            <person name="Overbeek R."/>
            <person name="Kirkness E.F."/>
            <person name="Weinstock K.G."/>
            <person name="Merrick J.M."/>
            <person name="Glodek A."/>
            <person name="Scott J.L."/>
            <person name="Geoghagen N.S.M."/>
            <person name="Weidman J.F."/>
            <person name="Fuhrmann J.L."/>
            <person name="Nguyen D."/>
            <person name="Utterback T.R."/>
            <person name="Kelley J.M."/>
            <person name="Peterson J.D."/>
            <person name="Sadow P.W."/>
            <person name="Hanna M.C."/>
            <person name="Cotton M.D."/>
            <person name="Roberts K.M."/>
            <person name="Hurst M.A."/>
            <person name="Kaine B.P."/>
            <person name="Borodovsky M."/>
            <person name="Klenk H.-P."/>
            <person name="Fraser C.M."/>
            <person name="Smith H.O."/>
            <person name="Woese C.R."/>
            <person name="Venter J.C."/>
        </authorList>
    </citation>
    <scope>NUCLEOTIDE SEQUENCE [LARGE SCALE GENOMIC DNA]</scope>
    <source>
        <strain>ATCC 43067 / DSM 2661 / JAL-1 / JCM 10045 / NBRC 100440</strain>
    </source>
</reference>